<gene>
    <name type="ordered locus">SCO2297</name>
    <name type="ORF">SCC30.05</name>
</gene>
<protein>
    <recommendedName>
        <fullName evidence="1">UPF0246 protein SCO2297</fullName>
    </recommendedName>
</protein>
<organism>
    <name type="scientific">Streptomyces coelicolor (strain ATCC BAA-471 / A3(2) / M145)</name>
    <dbReference type="NCBI Taxonomy" id="100226"/>
    <lineage>
        <taxon>Bacteria</taxon>
        <taxon>Bacillati</taxon>
        <taxon>Actinomycetota</taxon>
        <taxon>Actinomycetes</taxon>
        <taxon>Kitasatosporales</taxon>
        <taxon>Streptomycetaceae</taxon>
        <taxon>Streptomyces</taxon>
        <taxon>Streptomyces albidoflavus group</taxon>
    </lineage>
</organism>
<reference key="1">
    <citation type="journal article" date="2002" name="Nature">
        <title>Complete genome sequence of the model actinomycete Streptomyces coelicolor A3(2).</title>
        <authorList>
            <person name="Bentley S.D."/>
            <person name="Chater K.F."/>
            <person name="Cerdeno-Tarraga A.-M."/>
            <person name="Challis G.L."/>
            <person name="Thomson N.R."/>
            <person name="James K.D."/>
            <person name="Harris D.E."/>
            <person name="Quail M.A."/>
            <person name="Kieser H."/>
            <person name="Harper D."/>
            <person name="Bateman A."/>
            <person name="Brown S."/>
            <person name="Chandra G."/>
            <person name="Chen C.W."/>
            <person name="Collins M."/>
            <person name="Cronin A."/>
            <person name="Fraser A."/>
            <person name="Goble A."/>
            <person name="Hidalgo J."/>
            <person name="Hornsby T."/>
            <person name="Howarth S."/>
            <person name="Huang C.-H."/>
            <person name="Kieser T."/>
            <person name="Larke L."/>
            <person name="Murphy L.D."/>
            <person name="Oliver K."/>
            <person name="O'Neil S."/>
            <person name="Rabbinowitsch E."/>
            <person name="Rajandream M.A."/>
            <person name="Rutherford K.M."/>
            <person name="Rutter S."/>
            <person name="Seeger K."/>
            <person name="Saunders D."/>
            <person name="Sharp S."/>
            <person name="Squares R."/>
            <person name="Squares S."/>
            <person name="Taylor K."/>
            <person name="Warren T."/>
            <person name="Wietzorrek A."/>
            <person name="Woodward J.R."/>
            <person name="Barrell B.G."/>
            <person name="Parkhill J."/>
            <person name="Hopwood D.A."/>
        </authorList>
    </citation>
    <scope>NUCLEOTIDE SEQUENCE [LARGE SCALE GENOMIC DNA]</scope>
    <source>
        <strain>ATCC BAA-471 / A3(2) / M145</strain>
    </source>
</reference>
<evidence type="ECO:0000255" key="1">
    <source>
        <dbReference type="HAMAP-Rule" id="MF_00652"/>
    </source>
</evidence>
<proteinExistence type="inferred from homology"/>
<dbReference type="EMBL" id="AL939112">
    <property type="protein sequence ID" value="CAB88175.1"/>
    <property type="molecule type" value="Genomic_DNA"/>
</dbReference>
<dbReference type="RefSeq" id="NP_626545.1">
    <property type="nucleotide sequence ID" value="NC_003888.3"/>
</dbReference>
<dbReference type="SMR" id="Q9L016"/>
<dbReference type="STRING" id="100226.gene:17759895"/>
<dbReference type="PaxDb" id="100226-SCO2297"/>
<dbReference type="KEGG" id="sco:SCO2297"/>
<dbReference type="PATRIC" id="fig|100226.15.peg.2334"/>
<dbReference type="eggNOG" id="COG3022">
    <property type="taxonomic scope" value="Bacteria"/>
</dbReference>
<dbReference type="HOGENOM" id="CLU_071581_0_0_11"/>
<dbReference type="InParanoid" id="Q9L016"/>
<dbReference type="OrthoDB" id="3210767at2"/>
<dbReference type="Proteomes" id="UP000001973">
    <property type="component" value="Chromosome"/>
</dbReference>
<dbReference type="GO" id="GO:0005829">
    <property type="term" value="C:cytosol"/>
    <property type="evidence" value="ECO:0000318"/>
    <property type="project" value="GO_Central"/>
</dbReference>
<dbReference type="GO" id="GO:0033194">
    <property type="term" value="P:response to hydroperoxide"/>
    <property type="evidence" value="ECO:0000318"/>
    <property type="project" value="GO_Central"/>
</dbReference>
<dbReference type="HAMAP" id="MF_00652">
    <property type="entry name" value="UPF0246"/>
    <property type="match status" value="1"/>
</dbReference>
<dbReference type="InterPro" id="IPR005583">
    <property type="entry name" value="YaaA"/>
</dbReference>
<dbReference type="NCBIfam" id="NF002545">
    <property type="entry name" value="PRK02101.2-3"/>
    <property type="match status" value="1"/>
</dbReference>
<dbReference type="PANTHER" id="PTHR30283:SF4">
    <property type="entry name" value="PEROXIDE STRESS RESISTANCE PROTEIN YAAA"/>
    <property type="match status" value="1"/>
</dbReference>
<dbReference type="PANTHER" id="PTHR30283">
    <property type="entry name" value="PEROXIDE STRESS RESPONSE PROTEIN YAAA"/>
    <property type="match status" value="1"/>
</dbReference>
<dbReference type="Pfam" id="PF03883">
    <property type="entry name" value="H2O2_YaaD"/>
    <property type="match status" value="1"/>
</dbReference>
<comment type="similarity">
    <text evidence="1">Belongs to the UPF0246 family.</text>
</comment>
<feature type="chain" id="PRO_0000204007" description="UPF0246 protein SCO2297">
    <location>
        <begin position="1"/>
        <end position="260"/>
    </location>
</feature>
<sequence>MLVLLPPSEGKAASGRGAPLKTGSLSLPGLTAAREAVLGELVELCAGDEEKAREVLGLSEGLRGEVAKNTELLTAGARPAGEIYTGVLYDALDLASLDAAAKRRAARSLLVFSGLWGAVRMTDRIPSYRCSMGVKLPGLGALGAHWRAPMAEVLPEAAGDGLVLDLRSAAYAAAWKPKGEVAARTATVRVLHAPTRKVVSHFNKATKGRIVRSLLATGTAPEGPAELVEALRDLGYEVEAEAPAKGGRPWSLDVLVHEVH</sequence>
<accession>Q9L016</accession>
<name>Y2297_STRCO</name>
<keyword id="KW-1185">Reference proteome</keyword>